<comment type="function">
    <text evidence="1">Required for the maintenance of the structure of the mitochondrial inner membrane. Involved in mitochondrial morphology. Causes growth arrest when highly overexpressed (By similarity).</text>
</comment>
<comment type="subunit">
    <text evidence="1">Homooligomer.</text>
</comment>
<comment type="subcellular location">
    <subcellularLocation>
        <location evidence="1">Mitochondrion inner membrane</location>
        <topology evidence="1">Multi-pass membrane protein</topology>
    </subcellularLocation>
</comment>
<comment type="similarity">
    <text evidence="4">Belongs to the SHE9 family.</text>
</comment>
<accession>A1DEC4</accession>
<protein>
    <recommendedName>
        <fullName>Sensitive to high expression protein 9 homolog, mitochondrial</fullName>
    </recommendedName>
</protein>
<dbReference type="EMBL" id="DS027696">
    <property type="protein sequence ID" value="EAW17731.1"/>
    <property type="molecule type" value="Genomic_DNA"/>
</dbReference>
<dbReference type="RefSeq" id="XP_001259628.1">
    <property type="nucleotide sequence ID" value="XM_001259627.1"/>
</dbReference>
<dbReference type="SMR" id="A1DEC4"/>
<dbReference type="EnsemblFungi" id="EAW17731">
    <property type="protein sequence ID" value="EAW17731"/>
    <property type="gene ID" value="NFIA_076610"/>
</dbReference>
<dbReference type="GeneID" id="4585958"/>
<dbReference type="KEGG" id="nfi:NFIA_076610"/>
<dbReference type="VEuPathDB" id="FungiDB:NFIA_076610"/>
<dbReference type="eggNOG" id="ENOG502QQ1E">
    <property type="taxonomic scope" value="Eukaryota"/>
</dbReference>
<dbReference type="HOGENOM" id="CLU_025632_2_0_1"/>
<dbReference type="OMA" id="ERYMALI"/>
<dbReference type="OrthoDB" id="5595506at2759"/>
<dbReference type="Proteomes" id="UP000006702">
    <property type="component" value="Unassembled WGS sequence"/>
</dbReference>
<dbReference type="GO" id="GO:0005743">
    <property type="term" value="C:mitochondrial inner membrane"/>
    <property type="evidence" value="ECO:0007669"/>
    <property type="project" value="UniProtKB-SubCell"/>
</dbReference>
<dbReference type="GO" id="GO:0007007">
    <property type="term" value="P:inner mitochondrial membrane organization"/>
    <property type="evidence" value="ECO:0007669"/>
    <property type="project" value="TreeGrafter"/>
</dbReference>
<dbReference type="InterPro" id="IPR008839">
    <property type="entry name" value="MDM33_fungi"/>
</dbReference>
<dbReference type="PANTHER" id="PTHR31961">
    <property type="entry name" value="SENSITIVE TO HIGH EXPRESSION PROTEIN 9, MITOCHONDRIAL"/>
    <property type="match status" value="1"/>
</dbReference>
<dbReference type="PANTHER" id="PTHR31961:SF3">
    <property type="entry name" value="SENSITIVE TO HIGH EXPRESSION PROTEIN 9, MITOCHONDRIAL"/>
    <property type="match status" value="1"/>
</dbReference>
<dbReference type="Pfam" id="PF05546">
    <property type="entry name" value="She9_MDM33"/>
    <property type="match status" value="1"/>
</dbReference>
<name>SHE9_NEOFI</name>
<evidence type="ECO:0000250" key="1"/>
<evidence type="ECO:0000255" key="2"/>
<evidence type="ECO:0000256" key="3">
    <source>
        <dbReference type="SAM" id="MobiDB-lite"/>
    </source>
</evidence>
<evidence type="ECO:0000305" key="4"/>
<reference key="1">
    <citation type="journal article" date="2008" name="PLoS Genet.">
        <title>Genomic islands in the pathogenic filamentous fungus Aspergillus fumigatus.</title>
        <authorList>
            <person name="Fedorova N.D."/>
            <person name="Khaldi N."/>
            <person name="Joardar V.S."/>
            <person name="Maiti R."/>
            <person name="Amedeo P."/>
            <person name="Anderson M.J."/>
            <person name="Crabtree J."/>
            <person name="Silva J.C."/>
            <person name="Badger J.H."/>
            <person name="Albarraq A."/>
            <person name="Angiuoli S."/>
            <person name="Bussey H."/>
            <person name="Bowyer P."/>
            <person name="Cotty P.J."/>
            <person name="Dyer P.S."/>
            <person name="Egan A."/>
            <person name="Galens K."/>
            <person name="Fraser-Liggett C.M."/>
            <person name="Haas B.J."/>
            <person name="Inman J.M."/>
            <person name="Kent R."/>
            <person name="Lemieux S."/>
            <person name="Malavazi I."/>
            <person name="Orvis J."/>
            <person name="Roemer T."/>
            <person name="Ronning C.M."/>
            <person name="Sundaram J.P."/>
            <person name="Sutton G."/>
            <person name="Turner G."/>
            <person name="Venter J.C."/>
            <person name="White O.R."/>
            <person name="Whitty B.R."/>
            <person name="Youngman P."/>
            <person name="Wolfe K.H."/>
            <person name="Goldman G.H."/>
            <person name="Wortman J.R."/>
            <person name="Jiang B."/>
            <person name="Denning D.W."/>
            <person name="Nierman W.C."/>
        </authorList>
    </citation>
    <scope>NUCLEOTIDE SEQUENCE [LARGE SCALE GENOMIC DNA]</scope>
    <source>
        <strain>ATCC 1020 / DSM 3700 / CBS 544.65 / FGSC A1164 / JCM 1740 / NRRL 181 / WB 181</strain>
    </source>
</reference>
<feature type="transit peptide" description="Mitochondrion" evidence="2">
    <location>
        <begin position="1"/>
        <end status="unknown"/>
    </location>
</feature>
<feature type="chain" id="PRO_0000351060" description="Sensitive to high expression protein 9 homolog, mitochondrial">
    <location>
        <begin status="unknown"/>
        <end position="502"/>
    </location>
</feature>
<feature type="topological domain" description="Mitochondrial matrix" evidence="2">
    <location>
        <begin status="unknown"/>
        <end position="295"/>
    </location>
</feature>
<feature type="transmembrane region" description="Helical" evidence="2">
    <location>
        <begin position="296"/>
        <end position="316"/>
    </location>
</feature>
<feature type="topological domain" description="Mitochondrial intermembrane" evidence="2">
    <location>
        <begin position="317"/>
        <end position="478"/>
    </location>
</feature>
<feature type="transmembrane region" description="Helical" evidence="2">
    <location>
        <begin position="479"/>
        <end position="499"/>
    </location>
</feature>
<feature type="topological domain" description="Mitochondrial matrix" evidence="2">
    <location>
        <begin position="500"/>
        <end position="502"/>
    </location>
</feature>
<feature type="region of interest" description="Disordered" evidence="3">
    <location>
        <begin position="58"/>
        <end position="140"/>
    </location>
</feature>
<feature type="region of interest" description="Disordered" evidence="3">
    <location>
        <begin position="350"/>
        <end position="407"/>
    </location>
</feature>
<feature type="coiled-coil region" evidence="2">
    <location>
        <begin position="139"/>
        <end position="275"/>
    </location>
</feature>
<feature type="compositionally biased region" description="Basic and acidic residues" evidence="3">
    <location>
        <begin position="65"/>
        <end position="80"/>
    </location>
</feature>
<feature type="compositionally biased region" description="Basic and acidic residues" evidence="3">
    <location>
        <begin position="88"/>
        <end position="101"/>
    </location>
</feature>
<feature type="compositionally biased region" description="Basic and acidic residues" evidence="3">
    <location>
        <begin position="119"/>
        <end position="140"/>
    </location>
</feature>
<feature type="compositionally biased region" description="Low complexity" evidence="3">
    <location>
        <begin position="367"/>
        <end position="386"/>
    </location>
</feature>
<gene>
    <name type="primary">she9</name>
    <name type="ORF">NFIA_076610</name>
</gene>
<sequence length="502" mass="56220">MQPMPLLLRQSLRSSANFARTSLPIRPQFLPAAGPNIRPARDIQRSFSVCVRCQFRSQSPSYSSPEKDTLKDDAATRQSKDASSTLTPRDESPKVEPDAETQRPSPAAGEQDTLQGFDQDAKNEPKREPAEKKGLPSYLEERRSQLSKQFTEMMDNLQSNIFVAGQRLNDLTGYSAIEALKKDIQLQEERLREARQRVREAKDAYAAAINRRSASQREVNELLQRKHAWSAADLERFTHLYRNDHTNEVAEMETQDALSAAERESEEAAAQLSKSILSRYHEEQVWSDKIRRMSTWGTWGLMGVNVLLFLVFQIAVEPWRRKRLVKGFEEKVIEAIEKEKAINHIEILKPQPALTSTSPSSKEEAAEPTPTSTATKDTPTTDENTPAATDEAITSEPVVWDSDPTPTIVTNITPETATETTEDSAPKSATINLVEPRKPHLSRILPPLPPSTSLDSWRQTLNELFSDRSMVITQRDLTTVTLQSAAAGAAIMGLVIALIRPR</sequence>
<proteinExistence type="inferred from homology"/>
<keyword id="KW-0175">Coiled coil</keyword>
<keyword id="KW-0472">Membrane</keyword>
<keyword id="KW-0496">Mitochondrion</keyword>
<keyword id="KW-0999">Mitochondrion inner membrane</keyword>
<keyword id="KW-1185">Reference proteome</keyword>
<keyword id="KW-0809">Transit peptide</keyword>
<keyword id="KW-0812">Transmembrane</keyword>
<keyword id="KW-1133">Transmembrane helix</keyword>
<organism>
    <name type="scientific">Neosartorya fischeri (strain ATCC 1020 / DSM 3700 / CBS 544.65 / FGSC A1164 / JCM 1740 / NRRL 181 / WB 181)</name>
    <name type="common">Aspergillus fischerianus</name>
    <dbReference type="NCBI Taxonomy" id="331117"/>
    <lineage>
        <taxon>Eukaryota</taxon>
        <taxon>Fungi</taxon>
        <taxon>Dikarya</taxon>
        <taxon>Ascomycota</taxon>
        <taxon>Pezizomycotina</taxon>
        <taxon>Eurotiomycetes</taxon>
        <taxon>Eurotiomycetidae</taxon>
        <taxon>Eurotiales</taxon>
        <taxon>Aspergillaceae</taxon>
        <taxon>Aspergillus</taxon>
        <taxon>Aspergillus subgen. Fumigati</taxon>
    </lineage>
</organism>